<sequence length="153" mass="16193">MTTQVRKNVMDMFIDGARRGFTIATTNLLPNVVMAFVIIQALKITGLLDWVGHICEPVMALWGLPGEAATVLLAALMSMGGAVGVAASLATAGALTGHDVTVLLPAMYLMGNPVQNVGRCLGTAEVNAKYYPHIITVCVINALLSIWVMQLIV</sequence>
<organism>
    <name type="scientific">Escherichia coli O6:H1 (strain CFT073 / ATCC 700928 / UPEC)</name>
    <dbReference type="NCBI Taxonomy" id="199310"/>
    <lineage>
        <taxon>Bacteria</taxon>
        <taxon>Pseudomonadati</taxon>
        <taxon>Pseudomonadota</taxon>
        <taxon>Gammaproteobacteria</taxon>
        <taxon>Enterobacterales</taxon>
        <taxon>Enterobacteriaceae</taxon>
        <taxon>Escherichia</taxon>
    </lineage>
</organism>
<keyword id="KW-0997">Cell inner membrane</keyword>
<keyword id="KW-1003">Cell membrane</keyword>
<keyword id="KW-0472">Membrane</keyword>
<keyword id="KW-1185">Reference proteome</keyword>
<keyword id="KW-0812">Transmembrane</keyword>
<keyword id="KW-1133">Transmembrane helix</keyword>
<dbReference type="EMBL" id="AE014075">
    <property type="protein sequence ID" value="AAN83831.1"/>
    <property type="molecule type" value="Genomic_DNA"/>
</dbReference>
<dbReference type="RefSeq" id="WP_000211971.1">
    <property type="nucleotide sequence ID" value="NZ_CP051263.1"/>
</dbReference>
<dbReference type="STRING" id="199310.c5409"/>
<dbReference type="KEGG" id="ecc:c5409"/>
<dbReference type="eggNOG" id="COG0700">
    <property type="taxonomic scope" value="Bacteria"/>
</dbReference>
<dbReference type="HOGENOM" id="CLU_120911_0_0_6"/>
<dbReference type="BioCyc" id="ECOL199310:C5409-MONOMER"/>
<dbReference type="Proteomes" id="UP000001410">
    <property type="component" value="Chromosome"/>
</dbReference>
<dbReference type="GO" id="GO:0005886">
    <property type="term" value="C:plasma membrane"/>
    <property type="evidence" value="ECO:0007669"/>
    <property type="project" value="UniProtKB-SubCell"/>
</dbReference>
<dbReference type="InterPro" id="IPR011642">
    <property type="entry name" value="Gate_dom"/>
</dbReference>
<dbReference type="InterPro" id="IPR052549">
    <property type="entry name" value="SpmB"/>
</dbReference>
<dbReference type="NCBIfam" id="NF007811">
    <property type="entry name" value="PRK10519.1"/>
    <property type="match status" value="1"/>
</dbReference>
<dbReference type="PANTHER" id="PTHR35793">
    <property type="entry name" value="INNER MEMBRANE PROTEIN YJIG"/>
    <property type="match status" value="1"/>
</dbReference>
<dbReference type="PANTHER" id="PTHR35793:SF2">
    <property type="entry name" value="INNER MEMBRANE PROTEIN YJIG"/>
    <property type="match status" value="1"/>
</dbReference>
<dbReference type="Pfam" id="PF07670">
    <property type="entry name" value="Gate"/>
    <property type="match status" value="1"/>
</dbReference>
<accession>P0AEH9</accession>
<accession>P39378</accession>
<gene>
    <name type="primary">yjiG</name>
    <name type="ordered locus">c5409</name>
</gene>
<reference key="1">
    <citation type="journal article" date="2002" name="Proc. Natl. Acad. Sci. U.S.A.">
        <title>Extensive mosaic structure revealed by the complete genome sequence of uropathogenic Escherichia coli.</title>
        <authorList>
            <person name="Welch R.A."/>
            <person name="Burland V."/>
            <person name="Plunkett G. III"/>
            <person name="Redford P."/>
            <person name="Roesch P."/>
            <person name="Rasko D."/>
            <person name="Buckles E.L."/>
            <person name="Liou S.-R."/>
            <person name="Boutin A."/>
            <person name="Hackett J."/>
            <person name="Stroud D."/>
            <person name="Mayhew G.F."/>
            <person name="Rose D.J."/>
            <person name="Zhou S."/>
            <person name="Schwartz D.C."/>
            <person name="Perna N.T."/>
            <person name="Mobley H.L.T."/>
            <person name="Donnenberg M.S."/>
            <person name="Blattner F.R."/>
        </authorList>
    </citation>
    <scope>NUCLEOTIDE SEQUENCE [LARGE SCALE GENOMIC DNA]</scope>
    <source>
        <strain>CFT073 / ATCC 700928 / UPEC</strain>
    </source>
</reference>
<comment type="subcellular location">
    <subcellularLocation>
        <location evidence="1">Cell inner membrane</location>
        <topology evidence="1">Multi-pass membrane protein</topology>
    </subcellularLocation>
</comment>
<comment type="similarity">
    <text evidence="3">Belongs to the SpmB family.</text>
</comment>
<protein>
    <recommendedName>
        <fullName>Inner membrane protein YjiG</fullName>
    </recommendedName>
</protein>
<name>YJIG_ECOL6</name>
<feature type="chain" id="PRO_0000201934" description="Inner membrane protein YjiG">
    <location>
        <begin position="1"/>
        <end position="153"/>
    </location>
</feature>
<feature type="topological domain" description="Periplasmic" evidence="2">
    <location>
        <begin position="1"/>
        <end position="31"/>
    </location>
</feature>
<feature type="transmembrane region" description="Helical" evidence="2">
    <location>
        <begin position="32"/>
        <end position="52"/>
    </location>
</feature>
<feature type="topological domain" description="Cytoplasmic" evidence="2">
    <location>
        <begin position="53"/>
        <end position="68"/>
    </location>
</feature>
<feature type="transmembrane region" description="Helical" evidence="2">
    <location>
        <begin position="69"/>
        <end position="89"/>
    </location>
</feature>
<feature type="transmembrane region" description="Helical" evidence="2">
    <location>
        <begin position="90"/>
        <end position="110"/>
    </location>
</feature>
<feature type="topological domain" description="Cytoplasmic" evidence="2">
    <location>
        <begin position="111"/>
        <end position="132"/>
    </location>
</feature>
<feature type="transmembrane region" description="Helical" evidence="2">
    <location>
        <begin position="133"/>
        <end position="153"/>
    </location>
</feature>
<proteinExistence type="inferred from homology"/>
<evidence type="ECO:0000250" key="1"/>
<evidence type="ECO:0000255" key="2"/>
<evidence type="ECO:0000305" key="3"/>